<feature type="signal peptide" evidence="3">
    <location>
        <begin position="1"/>
        <end position="18"/>
    </location>
</feature>
<feature type="chain" id="PRO_0000024563" description="Merozoite surface protein 1">
    <location>
        <begin position="19"/>
        <end position="1751"/>
    </location>
</feature>
<feature type="chain" id="PRO_0000459297" description="p83 subunit" evidence="2">
    <location>
        <begin position="19" status="uncertain"/>
        <end position="714" status="uncertain"/>
    </location>
</feature>
<feature type="chain" id="PRO_0000459298" description="p30 subunit" evidence="2">
    <location>
        <begin position="715" status="uncertain"/>
        <end position="966" status="uncertain"/>
    </location>
</feature>
<feature type="chain" id="PRO_0000459299" description="p38 subunit" evidence="2">
    <location>
        <begin position="967" status="uncertain"/>
        <end position="1393" status="uncertain"/>
    </location>
</feature>
<feature type="chain" id="PRO_0000459300" description="p42 subunit" evidence="2">
    <location>
        <begin position="1394" status="uncertain"/>
        <end position="1751"/>
    </location>
</feature>
<feature type="chain" id="PRO_0000459301" description="p33 subunit" evidence="2">
    <location>
        <begin position="1394" status="uncertain"/>
        <end position="1654"/>
    </location>
</feature>
<feature type="chain" id="PRO_0000459302" description="p19 subunit" evidence="10">
    <location>
        <begin position="1655"/>
        <end position="1751"/>
    </location>
</feature>
<feature type="propeptide" id="PRO_0000024564" description="Removed in mature form" evidence="3">
    <location>
        <begin position="1752"/>
        <end position="1772"/>
    </location>
</feature>
<feature type="domain" description="EGF-like 1" evidence="10">
    <location>
        <begin position="1661"/>
        <end position="1703"/>
    </location>
</feature>
<feature type="domain" description="EGF-like 2" evidence="10">
    <location>
        <begin position="1704"/>
        <end position="1752"/>
    </location>
</feature>
<feature type="region of interest" description="Disordered" evidence="4">
    <location>
        <begin position="290"/>
        <end position="319"/>
    </location>
</feature>
<feature type="region of interest" description="Disordered" evidence="4">
    <location>
        <begin position="703"/>
        <end position="796"/>
    </location>
</feature>
<feature type="region of interest" description="Disordered" evidence="4">
    <location>
        <begin position="924"/>
        <end position="1070"/>
    </location>
</feature>
<feature type="region of interest" description="Disordered" evidence="4">
    <location>
        <begin position="1362"/>
        <end position="1383"/>
    </location>
</feature>
<feature type="compositionally biased region" description="Low complexity" evidence="4">
    <location>
        <begin position="305"/>
        <end position="319"/>
    </location>
</feature>
<feature type="compositionally biased region" description="Low complexity" evidence="4">
    <location>
        <begin position="724"/>
        <end position="796"/>
    </location>
</feature>
<feature type="compositionally biased region" description="Low complexity" evidence="4">
    <location>
        <begin position="930"/>
        <end position="946"/>
    </location>
</feature>
<feature type="compositionally biased region" description="Low complexity" evidence="4">
    <location>
        <begin position="956"/>
        <end position="1052"/>
    </location>
</feature>
<feature type="lipid moiety-binding region" description="GPI-anchor amidated serine" evidence="3">
    <location>
        <position position="1751"/>
    </location>
</feature>
<feature type="glycosylation site" description="N-linked (GlcNAc...) asparagine" evidence="3">
    <location>
        <position position="54"/>
    </location>
</feature>
<feature type="glycosylation site" description="N-linked (GlcNAc...) asparagine" evidence="3">
    <location>
        <position position="406"/>
    </location>
</feature>
<feature type="glycosylation site" description="N-linked (GlcNAc...) asparagine" evidence="3">
    <location>
        <position position="646"/>
    </location>
</feature>
<feature type="glycosylation site" description="N-linked (GlcNAc...) asparagine" evidence="3">
    <location>
        <position position="829"/>
    </location>
</feature>
<feature type="glycosylation site" description="N-linked (GlcNAc...) asparagine" evidence="3">
    <location>
        <position position="1018"/>
    </location>
</feature>
<feature type="glycosylation site" description="N-linked (GlcNAc...) asparagine" evidence="3">
    <location>
        <position position="1090"/>
    </location>
</feature>
<feature type="glycosylation site" description="N-linked (GlcNAc...) asparagine" evidence="3">
    <location>
        <position position="1408"/>
    </location>
</feature>
<feature type="glycosylation site" description="N-linked (GlcNAc...) asparagine" evidence="3">
    <location>
        <position position="1446"/>
    </location>
</feature>
<feature type="glycosylation site" description="N-linked (GlcNAc...) asparagine" evidence="3">
    <location>
        <position position="1541"/>
    </location>
</feature>
<feature type="glycosylation site" description="N-linked (GlcNAc...) asparagine" evidence="3">
    <location>
        <position position="1629"/>
    </location>
</feature>
<feature type="glycosylation site" description="N-linked (GlcNAc...) asparagine" evidence="3">
    <location>
        <position position="1680"/>
    </location>
</feature>
<feature type="disulfide bond" evidence="5 11">
    <location>
        <begin position="1663"/>
        <end position="1675"/>
    </location>
</feature>
<feature type="disulfide bond" evidence="5 11">
    <location>
        <begin position="1687"/>
        <end position="1699"/>
    </location>
</feature>
<feature type="disulfide bond" evidence="5 11">
    <location>
        <begin position="1707"/>
        <end position="1720"/>
    </location>
</feature>
<feature type="disulfide bond" evidence="5 11">
    <location>
        <begin position="1714"/>
        <end position="1734"/>
    </location>
</feature>
<feature type="disulfide bond" evidence="5 11">
    <location>
        <begin position="1736"/>
        <end position="1750"/>
    </location>
</feature>
<feature type="sequence conflict" description="In Ref. 4; AAA29762." evidence="9" ref="4">
    <original>L</original>
    <variation>V</variation>
    <location>
        <position position="1521"/>
    </location>
</feature>
<feature type="strand" evidence="13">
    <location>
        <begin position="1673"/>
        <end position="1677"/>
    </location>
</feature>
<feature type="strand" evidence="13">
    <location>
        <begin position="1679"/>
        <end position="1681"/>
    </location>
</feature>
<feature type="strand" evidence="13">
    <location>
        <begin position="1683"/>
        <end position="1687"/>
    </location>
</feature>
<feature type="strand" evidence="13">
    <location>
        <begin position="1691"/>
        <end position="1693"/>
    </location>
</feature>
<feature type="strand" evidence="13">
    <location>
        <begin position="1695"/>
        <end position="1697"/>
    </location>
</feature>
<feature type="strand" evidence="13">
    <location>
        <begin position="1699"/>
        <end position="1701"/>
    </location>
</feature>
<feature type="strand" evidence="14">
    <location>
        <begin position="1707"/>
        <end position="1709"/>
    </location>
</feature>
<feature type="helix" evidence="13">
    <location>
        <begin position="1710"/>
        <end position="1713"/>
    </location>
</feature>
<feature type="strand" evidence="13">
    <location>
        <begin position="1718"/>
        <end position="1722"/>
    </location>
</feature>
<feature type="strand" evidence="13">
    <location>
        <begin position="1726"/>
        <end position="1728"/>
    </location>
</feature>
<feature type="turn" evidence="13">
    <location>
        <begin position="1729"/>
        <end position="1731"/>
    </location>
</feature>
<feature type="strand" evidence="13">
    <location>
        <begin position="1732"/>
        <end position="1736"/>
    </location>
</feature>
<feature type="strand" evidence="13">
    <location>
        <begin position="1742"/>
        <end position="1744"/>
    </location>
</feature>
<feature type="turn" evidence="13">
    <location>
        <begin position="1745"/>
        <end position="1748"/>
    </location>
</feature>
<reference key="1">
    <citation type="journal article" date="1989" name="Mol. Biochem. Parasitol.">
        <title>Cloning and analysis of the gene encoding the 230-kilodalton merozoite surface antigen of Plasmodium yoelii.</title>
        <authorList>
            <person name="Lewis A.P."/>
        </authorList>
    </citation>
    <scope>NUCLEOTIDE SEQUENCE [GENOMIC DNA]</scope>
    <source>
        <strain>YM</strain>
    </source>
</reference>
<reference key="2">
    <citation type="journal article" date="2002" name="Nature">
        <title>Genome sequence and comparative analysis of the model rodent malaria parasite Plasmodium yoelii yoelii.</title>
        <authorList>
            <person name="Carlton J.M."/>
            <person name="Angiuoli S.V."/>
            <person name="Suh B.B."/>
            <person name="Kooij T.W."/>
            <person name="Pertea M."/>
            <person name="Silva J.C."/>
            <person name="Ermolaeva M.D."/>
            <person name="Allen J.E."/>
            <person name="Selengut J.D."/>
            <person name="Koo H.L."/>
            <person name="Peterson J.D."/>
            <person name="Pop M."/>
            <person name="Kosack D.S."/>
            <person name="Shumway M.F."/>
            <person name="Bidwell S.L."/>
            <person name="Shallom S.J."/>
            <person name="van Aken S.E."/>
            <person name="Riedmuller S.B."/>
            <person name="Feldblyum T.V."/>
            <person name="Cho J.K."/>
            <person name="Quackenbush J."/>
            <person name="Sedegah M."/>
            <person name="Shoaibi A."/>
            <person name="Cummings L.M."/>
            <person name="Florens L."/>
            <person name="Yates J.R. III"/>
            <person name="Raine J.D."/>
            <person name="Sinden R.E."/>
            <person name="Harris M.A."/>
            <person name="Cunningham D.A."/>
            <person name="Preiser P.R."/>
            <person name="Bergman L.W."/>
            <person name="Vaidya A.B."/>
            <person name="van Lin L.H."/>
            <person name="Janse C.J."/>
            <person name="Waters A.P."/>
            <person name="Smith H.O."/>
            <person name="White O.R."/>
            <person name="Salzberg S.L."/>
            <person name="Venter J.C."/>
            <person name="Fraser C.M."/>
            <person name="Hoffman S.L."/>
            <person name="Gardner M.J."/>
            <person name="Carucci D.J."/>
        </authorList>
    </citation>
    <scope>NUCLEOTIDE SEQUENCE [LARGE SCALE GENOMIC DNA]</scope>
    <source>
        <strain>17XNL</strain>
    </source>
</reference>
<reference key="3">
    <citation type="journal article" date="1989" name="Mol. Biochem. Parasitol.">
        <title>Precursor to the major merozoite surface antigen of Plasmodium yoelii: cloning and sequencing of the middle 1.9 kb region.</title>
        <authorList>
            <person name="Daly T.M."/>
            <person name="Burns J.M. Jr."/>
            <person name="Long C.A."/>
        </authorList>
    </citation>
    <scope>NUCLEOTIDE SEQUENCE [GENOMIC DNA] OF 454-1094</scope>
</reference>
<reference key="4">
    <citation type="journal article" date="1988" name="Proc. Natl. Acad. Sci. U.S.A.">
        <title>The 3' portion of the gene for a Plasmodium yoelii merozoite surface antigen encodes the epitope recognized by a protective monoclonal antibody.</title>
        <authorList>
            <person name="Burns J.M. Jr."/>
            <person name="Daly T.M."/>
            <person name="Vaidya A.B."/>
            <person name="Long C.A."/>
        </authorList>
    </citation>
    <scope>NUCLEOTIDE SEQUENCE [GENOMIC DNA] OF 1093-1772</scope>
    <source>
        <strain>17XL</strain>
    </source>
</reference>
<reference evidence="11 12" key="5">
    <citation type="journal article" date="2014" name="Open Biol.">
        <title>The structure of Plasmodium yoelii merozoite surface protein 119, antibody specificity and implications for malaria vaccine design.</title>
        <authorList>
            <person name="Curd R.D."/>
            <person name="Birdsall B."/>
            <person name="Kadekoppala M."/>
            <person name="Ogun S.A."/>
            <person name="Kelly G."/>
            <person name="Holder A.A."/>
        </authorList>
    </citation>
    <scope>STRUCTURE BY NMR OF 1656-1754 OF WILD TYPE AND LYS-1683</scope>
    <scope>FUNCTION</scope>
    <scope>BIOTECHNOLOGY</scope>
    <scope>DISULFIDE BONDS</scope>
</reference>
<sequence length="1772" mass="197231">MKVIGLLFSFVFFAIKCKSETIEVYNDLIQKLEKLESLSVDGLELFQKSQVIINATQPTETIDPFTNHNFAQQVQDFVTKFEGLGFTEQTELVNLIKALTPNRYGVKYLIESKEEFNGLMHAINFYYDVLRDKLNDMCANNYCEIPEHLKISEEETEMLKKVILGYRKPIENIQDDIEKLEIYIERNKETVAALNALIAEETKKIQPEGNEDCNDASCDSDKYNKKKPIYQAMYNVIFYKKQLAEIQKVVEVLEKRVSTLKKNDAIKPLWQQIEVLNAAPVVTAETQIVTGGQSSTEPGSGGSSASGTSSSGQASAGTGVEQANTVASVTVTPSVGQNGEASTNPQTAQVQPVPTLTLEEKQKKIAGLYAQIKEIAKTIKFNLEGIFVDPIELEYFKKEKKKESCNLSTSSCKKNKASETIIPLTIRYPNGISYPLPENDVYNKIANNAAETTYGDLTHPDNTPLTGDLATNEQARKDLIKAIKKKIKAEEKKLETLKTNYDNKLTEFNQQKTPFKEAAKEFYESKFRNKLTSEIFEKFKTKRDEYMTKKTELNTCEYGNTKELINKLNKQLNYLQDYSLRKDIISNEIEYFSNKKKELQYNINRLAEAVQAKQNVLVASKDVPLSTLVELQIQKSLLTKQIEQLNKTEVSLNKAQLKDKLYVPKTYGNEGKPEPYYLIAVKKEVDRLAQFIPKIESMIAKEKERMEQGPAITGESEEVPSGPSAESSTDRSTQSSTSSSSSSSSTPAAAESSSATLPEAPAPAEAASPSTEASEETTIPPTTQETQPSQAASSTTPAKPVMTKLYYLEKLQKFLVFSYSCHKYVLLQNSTINKDALSKYALTSEEDKIRTLKRCSELDVLLAIQNNMPTMYSLYESIVDGLQNIYTELYEKEMMYHIYKLKDENPSIKSLLVKAGVIEPEPVAAPTPVTPAATEQQQQQATPDVQSDAPAPSDVSQQPETPVTSTTPEVTTSTEASSSAPGEGTPSGEAGASGTEGATASNAATPAGTSASGSAASNASTTSDVTPPAAAAAVPSTSTPAPAQPPAANSQSGNPDSGIRSRAESEEDMPADDFELDNLYKSYLQQIDGNNTEFINFIKSKKELIKALTPEKVNQLYLEIAHLKELSEHYYDRYSTYKLKLERLYNKHEQIQLTNRQIRDLSILKARLLKRKQTLNGVFYILNGYVNFFNKRREAEKQYVDNALKNTDMLLKYYKARTKYFTSEAVPLKTLSKASLDRESNYLKIEKFRAYSRLELRLKKNINLGKERISYVSGGLHHVFEEFKELIKDKDYTGKKNPDNAPEVTNAFEQYKELLPKGVTVSTPAVAVTTTLAADAPATPEGAVPGAVPGAVPGAVPGAVPGAVPGSGTDTRVAGSSVDDNEDDDIYQIASGQSEDAPEKDILSEFTNESLYVYTKRLGSTYKSLKKHMLREFSTIKEDMTNGLNNKSQKRNDFLEVLSHELDLFKDLSTNKYVIRNPYQLLDNDKKDKQIVNLKYATKGINEDIETTTDGIKFFNKMVELYNTQLAAVKEQIATIEAETNDTNKEEKKKYIPILEDLKGLYETVIGQAEEYSEELQNRLDNYKNEKAEFEILTKNLEKYIQIDEKLDEFVEHAENNKHIASIALNNLNKSGLVGEGESKKILAKMLNMDGMDLLGVDPKHVCVDTRDIPKNAGCFRDDNGTEEWRCLLGYKKGEGNTCVENNNPTCDINNGGCDPTASCQNAESTENSKKIICTCKEPTPNAYYEGVFCSSSSFMGLSILLIITLIVFNIF</sequence>
<organism>
    <name type="scientific">Plasmodium yoelii yoelii</name>
    <dbReference type="NCBI Taxonomy" id="73239"/>
    <lineage>
        <taxon>Eukaryota</taxon>
        <taxon>Sar</taxon>
        <taxon>Alveolata</taxon>
        <taxon>Apicomplexa</taxon>
        <taxon>Aconoidasida</taxon>
        <taxon>Haemosporida</taxon>
        <taxon>Plasmodiidae</taxon>
        <taxon>Plasmodium</taxon>
        <taxon>Plasmodium (Vinckeia)</taxon>
    </lineage>
</organism>
<comment type="function">
    <text evidence="2">During the asexual blood stage, involved in merozoite egress from host erythrocytes possibly via its interaction with the host cytoskeleton protein spectrin resulting in the destabilization of the host cytoskeleton and thus leading to erythrocyte cell membrane rupture (By similarity). Involved in the binding to host erythrocytes and is required for host erythrocyte invasion (By similarity).</text>
</comment>
<comment type="subunit">
    <text evidence="2">Forms a complex composed of subunits p83, p30, p38, and p42 which remain non-covalently associated; the complex is formed at the merozoite surface prior to egress from host erythrocytes.</text>
</comment>
<comment type="subcellular location">
    <subcellularLocation>
        <location evidence="3">Cell membrane</location>
        <topology evidence="3">Lipid-anchor</topology>
        <topology evidence="3">GPI-anchor</topology>
    </subcellularLocation>
    <subcellularLocation>
        <location evidence="1">Secreted</location>
    </subcellularLocation>
</comment>
<comment type="PTM">
    <text evidence="2">The p230 precursor is cleaved by SUB1 prior to merozoite egress into 4 subunits p83, p30, p38, and p42 which remain non-covalently associated (By similarity). In a second processing step during erythrocyte invasion, p42 is cleaved by SUB2 into p33 and p19; the latter remains attached to the merozoite surface via its GPI-anchor and stays on the surface during the subsequent ring stage (By similarity).</text>
</comment>
<comment type="biotechnology">
    <molecule>p19 subunit</molecule>
    <text evidence="5">Potential candidate for the development of parasite blood stage vaccines (PubMed:24403012). In vitro, neutralizing antibodies against the p19 subunit are capable of inhibiting parasite growth in host erythrocytes (PubMed:24403012).</text>
</comment>
<protein>
    <recommendedName>
        <fullName evidence="6">Merozoite surface protein 1</fullName>
    </recommendedName>
    <alternativeName>
        <fullName evidence="7">230 kDa merozoite surface antigen</fullName>
        <shortName evidence="7">Py230</shortName>
    </alternativeName>
    <alternativeName>
        <fullName evidence="7">Merozoite surface antigen</fullName>
    </alternativeName>
    <alternativeName>
        <fullName evidence="8">PMMSA</fullName>
    </alternativeName>
    <component>
        <recommendedName>
            <fullName evidence="2">p83 subunit</fullName>
        </recommendedName>
    </component>
    <component>
        <recommendedName>
            <fullName evidence="2">p30 subunit</fullName>
        </recommendedName>
    </component>
    <component>
        <recommendedName>
            <fullName evidence="2">p38 subunit</fullName>
        </recommendedName>
    </component>
    <component>
        <recommendedName>
            <fullName evidence="2">p42 subunit</fullName>
        </recommendedName>
    </component>
    <component>
        <recommendedName>
            <fullName evidence="2">p33 subunit</fullName>
        </recommendedName>
    </component>
    <component>
        <recommendedName>
            <fullName evidence="6">p19 subunit</fullName>
        </recommendedName>
    </component>
</protein>
<name>MSP1_PLAYO</name>
<accession>P13828</accession>
<accession>Q6LEJ9</accession>
<accession>Q7RCN0</accession>
<proteinExistence type="evidence at protein level"/>
<keyword id="KW-0002">3D-structure</keyword>
<keyword id="KW-1003">Cell membrane</keyword>
<keyword id="KW-1015">Disulfide bond</keyword>
<keyword id="KW-0245">EGF-like domain</keyword>
<keyword id="KW-0325">Glycoprotein</keyword>
<keyword id="KW-0336">GPI-anchor</keyword>
<keyword id="KW-0449">Lipoprotein</keyword>
<keyword id="KW-0461">Malaria</keyword>
<keyword id="KW-0472">Membrane</keyword>
<keyword id="KW-0477">Merozoite</keyword>
<keyword id="KW-1185">Reference proteome</keyword>
<keyword id="KW-0677">Repeat</keyword>
<keyword id="KW-0964">Secreted</keyword>
<keyword id="KW-0732">Signal</keyword>
<gene>
    <name evidence="6" type="primary">MSP1</name>
    <name type="ORF">PY05748</name>
</gene>
<dbReference type="EMBL" id="J04668">
    <property type="protein sequence ID" value="AAA29702.1"/>
    <property type="molecule type" value="Genomic_DNA"/>
</dbReference>
<dbReference type="EMBL" id="AABL01001865">
    <property type="protein sequence ID" value="EAA17822.1"/>
    <property type="molecule type" value="Genomic_DNA"/>
</dbReference>
<dbReference type="EMBL" id="J03975">
    <property type="protein sequence ID" value="AAA29486.1"/>
    <property type="molecule type" value="Genomic_DNA"/>
</dbReference>
<dbReference type="EMBL" id="J03612">
    <property type="protein sequence ID" value="AAA29762.1"/>
    <property type="molecule type" value="Genomic_DNA"/>
</dbReference>
<dbReference type="PIR" id="A28121">
    <property type="entry name" value="A28121"/>
</dbReference>
<dbReference type="PIR" id="A45532">
    <property type="entry name" value="A45532"/>
</dbReference>
<dbReference type="RefSeq" id="XP_726257.1">
    <property type="nucleotide sequence ID" value="XM_721164.1"/>
</dbReference>
<dbReference type="PDB" id="2MGP">
    <property type="method" value="NMR"/>
    <property type="chains" value="A=1656-1754"/>
</dbReference>
<dbReference type="PDB" id="2MGR">
    <property type="method" value="NMR"/>
    <property type="chains" value="A=1656-1754"/>
</dbReference>
<dbReference type="PDBsum" id="2MGP"/>
<dbReference type="PDBsum" id="2MGR"/>
<dbReference type="BMRB" id="P13828"/>
<dbReference type="SMR" id="P13828"/>
<dbReference type="FunCoup" id="P13828">
    <property type="interactions" value="5"/>
</dbReference>
<dbReference type="STRING" id="73239.P13828"/>
<dbReference type="GlyCosmos" id="P13828">
    <property type="glycosylation" value="11 sites, No reported glycans"/>
</dbReference>
<dbReference type="PaxDb" id="73239-P13828"/>
<dbReference type="EnsemblProtists" id="EAA17822">
    <property type="protein sequence ID" value="EAA17822"/>
    <property type="gene ID" value="EAA17822"/>
</dbReference>
<dbReference type="KEGG" id="pyo:PY17X_0834400"/>
<dbReference type="VEuPathDB" id="PlasmoDB:Py17XNL_000801900"/>
<dbReference type="InParanoid" id="P13828"/>
<dbReference type="EvolutionaryTrace" id="P13828"/>
<dbReference type="Proteomes" id="UP000008553">
    <property type="component" value="Unassembled WGS sequence"/>
</dbReference>
<dbReference type="GO" id="GO:0005576">
    <property type="term" value="C:extracellular region"/>
    <property type="evidence" value="ECO:0007669"/>
    <property type="project" value="UniProtKB-SubCell"/>
</dbReference>
<dbReference type="GO" id="GO:0005886">
    <property type="term" value="C:plasma membrane"/>
    <property type="evidence" value="ECO:0007669"/>
    <property type="project" value="UniProtKB-SubCell"/>
</dbReference>
<dbReference type="GO" id="GO:0098552">
    <property type="term" value="C:side of membrane"/>
    <property type="evidence" value="ECO:0007669"/>
    <property type="project" value="UniProtKB-KW"/>
</dbReference>
<dbReference type="GO" id="GO:0000993">
    <property type="term" value="F:RNA polymerase II complex binding"/>
    <property type="evidence" value="ECO:0007669"/>
    <property type="project" value="TreeGrafter"/>
</dbReference>
<dbReference type="GO" id="GO:0031124">
    <property type="term" value="P:mRNA 3'-end processing"/>
    <property type="evidence" value="ECO:0007669"/>
    <property type="project" value="TreeGrafter"/>
</dbReference>
<dbReference type="Gene3D" id="2.10.25.10">
    <property type="entry name" value="Laminin"/>
    <property type="match status" value="2"/>
</dbReference>
<dbReference type="InterPro" id="IPR010901">
    <property type="entry name" value="MSP1_C"/>
</dbReference>
<dbReference type="InterPro" id="IPR024730">
    <property type="entry name" value="MSP1_EGF_1"/>
</dbReference>
<dbReference type="PANTHER" id="PTHR12460">
    <property type="entry name" value="CYCLIN-DEPENDENT KINASE INHIBITOR-RELATED PROTEIN"/>
    <property type="match status" value="1"/>
</dbReference>
<dbReference type="PANTHER" id="PTHR12460:SF40">
    <property type="entry name" value="REGULATION OF NUCLEAR PRE-MRNA DOMAIN-CONTAINING PROTEIN 2"/>
    <property type="match status" value="1"/>
</dbReference>
<dbReference type="Pfam" id="PF12946">
    <property type="entry name" value="EGF_MSP1_1"/>
    <property type="match status" value="1"/>
</dbReference>
<dbReference type="Pfam" id="PF07462">
    <property type="entry name" value="MSP1_C"/>
    <property type="match status" value="1"/>
</dbReference>
<dbReference type="SUPFAM" id="SSF57196">
    <property type="entry name" value="EGF/Laminin"/>
    <property type="match status" value="2"/>
</dbReference>
<evidence type="ECO:0000250" key="1">
    <source>
        <dbReference type="UniProtKB" id="P04933"/>
    </source>
</evidence>
<evidence type="ECO:0000250" key="2">
    <source>
        <dbReference type="UniProtKB" id="Q8I0U8"/>
    </source>
</evidence>
<evidence type="ECO:0000255" key="3"/>
<evidence type="ECO:0000256" key="4">
    <source>
        <dbReference type="SAM" id="MobiDB-lite"/>
    </source>
</evidence>
<evidence type="ECO:0000269" key="5">
    <source>
    </source>
</evidence>
<evidence type="ECO:0000303" key="6">
    <source>
    </source>
</evidence>
<evidence type="ECO:0000303" key="7">
    <source>
    </source>
</evidence>
<evidence type="ECO:0000303" key="8">
    <source>
    </source>
</evidence>
<evidence type="ECO:0000305" key="9"/>
<evidence type="ECO:0000305" key="10">
    <source>
    </source>
</evidence>
<evidence type="ECO:0007744" key="11">
    <source>
        <dbReference type="PDB" id="2MGP"/>
    </source>
</evidence>
<evidence type="ECO:0007744" key="12">
    <source>
        <dbReference type="PDB" id="2MGR"/>
    </source>
</evidence>
<evidence type="ECO:0007829" key="13">
    <source>
        <dbReference type="PDB" id="2MGP"/>
    </source>
</evidence>
<evidence type="ECO:0007829" key="14">
    <source>
        <dbReference type="PDB" id="2MGR"/>
    </source>
</evidence>